<organism>
    <name type="scientific">Streptococcus pneumoniae (strain ATCC BAA-255 / R6)</name>
    <dbReference type="NCBI Taxonomy" id="171101"/>
    <lineage>
        <taxon>Bacteria</taxon>
        <taxon>Bacillati</taxon>
        <taxon>Bacillota</taxon>
        <taxon>Bacilli</taxon>
        <taxon>Lactobacillales</taxon>
        <taxon>Streptococcaceae</taxon>
        <taxon>Streptococcus</taxon>
    </lineage>
</organism>
<accession>Q8DNX2</accession>
<protein>
    <recommendedName>
        <fullName evidence="1">D-aminoacyl-tRNA deacylase</fullName>
        <shortName evidence="1">DTD</shortName>
        <ecNumber evidence="1">3.1.1.96</ecNumber>
    </recommendedName>
    <alternativeName>
        <fullName evidence="1">Gly-tRNA(Ala) deacylase</fullName>
    </alternativeName>
</protein>
<comment type="function">
    <text evidence="1">An aminoacyl-tRNA editing enzyme that deacylates mischarged D-aminoacyl-tRNAs. Also deacylates mischarged glycyl-tRNA(Ala), protecting cells against glycine mischarging by AlaRS. Acts via tRNA-based rather than protein-based catalysis; rejects L-amino acids rather than detecting D-amino acids in the active site. By recycling D-aminoacyl-tRNA to D-amino acids and free tRNA molecules, this enzyme counteracts the toxicity associated with the formation of D-aminoacyl-tRNA entities in vivo and helps enforce protein L-homochirality.</text>
</comment>
<comment type="catalytic activity">
    <reaction evidence="1">
        <text>glycyl-tRNA(Ala) + H2O = tRNA(Ala) + glycine + H(+)</text>
        <dbReference type="Rhea" id="RHEA:53744"/>
        <dbReference type="Rhea" id="RHEA-COMP:9657"/>
        <dbReference type="Rhea" id="RHEA-COMP:13640"/>
        <dbReference type="ChEBI" id="CHEBI:15377"/>
        <dbReference type="ChEBI" id="CHEBI:15378"/>
        <dbReference type="ChEBI" id="CHEBI:57305"/>
        <dbReference type="ChEBI" id="CHEBI:78442"/>
        <dbReference type="ChEBI" id="CHEBI:78522"/>
        <dbReference type="EC" id="3.1.1.96"/>
    </reaction>
</comment>
<comment type="catalytic activity">
    <reaction evidence="1">
        <text>a D-aminoacyl-tRNA + H2O = a tRNA + a D-alpha-amino acid + H(+)</text>
        <dbReference type="Rhea" id="RHEA:13953"/>
        <dbReference type="Rhea" id="RHEA-COMP:10123"/>
        <dbReference type="Rhea" id="RHEA-COMP:10124"/>
        <dbReference type="ChEBI" id="CHEBI:15377"/>
        <dbReference type="ChEBI" id="CHEBI:15378"/>
        <dbReference type="ChEBI" id="CHEBI:59871"/>
        <dbReference type="ChEBI" id="CHEBI:78442"/>
        <dbReference type="ChEBI" id="CHEBI:79333"/>
        <dbReference type="EC" id="3.1.1.96"/>
    </reaction>
</comment>
<comment type="subunit">
    <text evidence="1">Homodimer.</text>
</comment>
<comment type="subcellular location">
    <subcellularLocation>
        <location evidence="1">Cytoplasm</location>
    </subcellularLocation>
</comment>
<comment type="domain">
    <text evidence="1">A Gly-cisPro motif from one monomer fits into the active site of the other monomer to allow specific chiral rejection of L-amino acids.</text>
</comment>
<comment type="similarity">
    <text evidence="1">Belongs to the DTD family.</text>
</comment>
<evidence type="ECO:0000255" key="1">
    <source>
        <dbReference type="HAMAP-Rule" id="MF_00518"/>
    </source>
</evidence>
<gene>
    <name evidence="1" type="primary">dtd</name>
    <name type="ordered locus">spr1486</name>
</gene>
<keyword id="KW-0963">Cytoplasm</keyword>
<keyword id="KW-0378">Hydrolase</keyword>
<keyword id="KW-1185">Reference proteome</keyword>
<keyword id="KW-0694">RNA-binding</keyword>
<keyword id="KW-0820">tRNA-binding</keyword>
<sequence>MKIIIQRVKKAQVSIEGQIQGKINQGLLLLVGVGPEDQEEDLDYAVRKLVNMRIFSDAEGKMNLSVKDIEGEILSISQFTLFADTKKGNRPAFTGAAKPDMASDFYDAFNQKLAQEVPVQTGIFGADMQVELVNNGPVTIILDTKKR</sequence>
<proteinExistence type="inferred from homology"/>
<name>DTD_STRR6</name>
<dbReference type="EC" id="3.1.1.96" evidence="1"/>
<dbReference type="EMBL" id="AE007317">
    <property type="protein sequence ID" value="AAL00290.1"/>
    <property type="molecule type" value="Genomic_DNA"/>
</dbReference>
<dbReference type="PIR" id="E98057">
    <property type="entry name" value="E98057"/>
</dbReference>
<dbReference type="RefSeq" id="NP_359079.1">
    <property type="nucleotide sequence ID" value="NC_003098.1"/>
</dbReference>
<dbReference type="RefSeq" id="WP_000691400.1">
    <property type="nucleotide sequence ID" value="NC_003098.1"/>
</dbReference>
<dbReference type="SMR" id="Q8DNX2"/>
<dbReference type="STRING" id="171101.spr1486"/>
<dbReference type="GeneID" id="45653142"/>
<dbReference type="KEGG" id="spr:spr1486"/>
<dbReference type="PATRIC" id="fig|171101.6.peg.1605"/>
<dbReference type="eggNOG" id="COG1490">
    <property type="taxonomic scope" value="Bacteria"/>
</dbReference>
<dbReference type="HOGENOM" id="CLU_076901_1_0_9"/>
<dbReference type="Proteomes" id="UP000000586">
    <property type="component" value="Chromosome"/>
</dbReference>
<dbReference type="GO" id="GO:0005737">
    <property type="term" value="C:cytoplasm"/>
    <property type="evidence" value="ECO:0000318"/>
    <property type="project" value="GO_Central"/>
</dbReference>
<dbReference type="GO" id="GO:0051500">
    <property type="term" value="F:D-tyrosyl-tRNA(Tyr) deacylase activity"/>
    <property type="evidence" value="ECO:0000318"/>
    <property type="project" value="GO_Central"/>
</dbReference>
<dbReference type="GO" id="GO:0106026">
    <property type="term" value="F:Gly-tRNA(Ala) deacylase activity"/>
    <property type="evidence" value="ECO:0007669"/>
    <property type="project" value="UniProtKB-UniRule"/>
</dbReference>
<dbReference type="GO" id="GO:0043908">
    <property type="term" value="F:Ser(Gly)-tRNA(Ala) hydrolase activity"/>
    <property type="evidence" value="ECO:0007669"/>
    <property type="project" value="UniProtKB-UniRule"/>
</dbReference>
<dbReference type="GO" id="GO:0000049">
    <property type="term" value="F:tRNA binding"/>
    <property type="evidence" value="ECO:0007669"/>
    <property type="project" value="UniProtKB-UniRule"/>
</dbReference>
<dbReference type="GO" id="GO:0019478">
    <property type="term" value="P:D-amino acid catabolic process"/>
    <property type="evidence" value="ECO:0007669"/>
    <property type="project" value="UniProtKB-UniRule"/>
</dbReference>
<dbReference type="GO" id="GO:0006399">
    <property type="term" value="P:tRNA metabolic process"/>
    <property type="evidence" value="ECO:0000318"/>
    <property type="project" value="GO_Central"/>
</dbReference>
<dbReference type="CDD" id="cd00563">
    <property type="entry name" value="Dtyr_deacylase"/>
    <property type="match status" value="1"/>
</dbReference>
<dbReference type="FunFam" id="3.50.80.10:FF:000001">
    <property type="entry name" value="D-aminoacyl-tRNA deacylase"/>
    <property type="match status" value="1"/>
</dbReference>
<dbReference type="Gene3D" id="3.50.80.10">
    <property type="entry name" value="D-tyrosyl-tRNA(Tyr) deacylase"/>
    <property type="match status" value="1"/>
</dbReference>
<dbReference type="HAMAP" id="MF_00518">
    <property type="entry name" value="Deacylase_Dtd"/>
    <property type="match status" value="1"/>
</dbReference>
<dbReference type="InterPro" id="IPR003732">
    <property type="entry name" value="Daa-tRNA_deacyls_DTD"/>
</dbReference>
<dbReference type="InterPro" id="IPR023509">
    <property type="entry name" value="DTD-like_sf"/>
</dbReference>
<dbReference type="NCBIfam" id="TIGR00256">
    <property type="entry name" value="D-aminoacyl-tRNA deacylase"/>
    <property type="match status" value="1"/>
</dbReference>
<dbReference type="PANTHER" id="PTHR10472:SF5">
    <property type="entry name" value="D-AMINOACYL-TRNA DEACYLASE 1"/>
    <property type="match status" value="1"/>
</dbReference>
<dbReference type="PANTHER" id="PTHR10472">
    <property type="entry name" value="D-TYROSYL-TRNA TYR DEACYLASE"/>
    <property type="match status" value="1"/>
</dbReference>
<dbReference type="Pfam" id="PF02580">
    <property type="entry name" value="Tyr_Deacylase"/>
    <property type="match status" value="1"/>
</dbReference>
<dbReference type="SUPFAM" id="SSF69500">
    <property type="entry name" value="DTD-like"/>
    <property type="match status" value="1"/>
</dbReference>
<feature type="chain" id="PRO_0000164602" description="D-aminoacyl-tRNA deacylase">
    <location>
        <begin position="1"/>
        <end position="147"/>
    </location>
</feature>
<feature type="short sequence motif" description="Gly-cisPro motif, important for rejection of L-amino acids" evidence="1">
    <location>
        <begin position="136"/>
        <end position="137"/>
    </location>
</feature>
<reference key="1">
    <citation type="journal article" date="2001" name="J. Bacteriol.">
        <title>Genome of the bacterium Streptococcus pneumoniae strain R6.</title>
        <authorList>
            <person name="Hoskins J."/>
            <person name="Alborn W.E. Jr."/>
            <person name="Arnold J."/>
            <person name="Blaszczak L.C."/>
            <person name="Burgett S."/>
            <person name="DeHoff B.S."/>
            <person name="Estrem S.T."/>
            <person name="Fritz L."/>
            <person name="Fu D.-J."/>
            <person name="Fuller W."/>
            <person name="Geringer C."/>
            <person name="Gilmour R."/>
            <person name="Glass J.S."/>
            <person name="Khoja H."/>
            <person name="Kraft A.R."/>
            <person name="Lagace R.E."/>
            <person name="LeBlanc D.J."/>
            <person name="Lee L.N."/>
            <person name="Lefkowitz E.J."/>
            <person name="Lu J."/>
            <person name="Matsushima P."/>
            <person name="McAhren S.M."/>
            <person name="McHenney M."/>
            <person name="McLeaster K."/>
            <person name="Mundy C.W."/>
            <person name="Nicas T.I."/>
            <person name="Norris F.H."/>
            <person name="O'Gara M."/>
            <person name="Peery R.B."/>
            <person name="Robertson G.T."/>
            <person name="Rockey P."/>
            <person name="Sun P.-M."/>
            <person name="Winkler M.E."/>
            <person name="Yang Y."/>
            <person name="Young-Bellido M."/>
            <person name="Zhao G."/>
            <person name="Zook C.A."/>
            <person name="Baltz R.H."/>
            <person name="Jaskunas S.R."/>
            <person name="Rosteck P.R. Jr."/>
            <person name="Skatrud P.L."/>
            <person name="Glass J.I."/>
        </authorList>
    </citation>
    <scope>NUCLEOTIDE SEQUENCE [LARGE SCALE GENOMIC DNA]</scope>
    <source>
        <strain>ATCC BAA-255 / R6</strain>
    </source>
</reference>